<name>YCEH_ECODH</name>
<feature type="chain" id="PRO_1000201239" description="UPF0502 protein YceH">
    <location>
        <begin position="1"/>
        <end position="215"/>
    </location>
</feature>
<feature type="modified residue" description="N6-acetyllysine" evidence="1">
    <location>
        <position position="80"/>
    </location>
</feature>
<accession>B1X9I0</accession>
<protein>
    <recommendedName>
        <fullName evidence="1">UPF0502 protein YceH</fullName>
    </recommendedName>
</protein>
<gene>
    <name evidence="1" type="primary">yceH</name>
    <name type="ordered locus">ECDH10B_1138</name>
</gene>
<evidence type="ECO:0000255" key="1">
    <source>
        <dbReference type="HAMAP-Rule" id="MF_01584"/>
    </source>
</evidence>
<reference key="1">
    <citation type="journal article" date="2008" name="J. Bacteriol.">
        <title>The complete genome sequence of Escherichia coli DH10B: insights into the biology of a laboratory workhorse.</title>
        <authorList>
            <person name="Durfee T."/>
            <person name="Nelson R."/>
            <person name="Baldwin S."/>
            <person name="Plunkett G. III"/>
            <person name="Burland V."/>
            <person name="Mau B."/>
            <person name="Petrosino J.F."/>
            <person name="Qin X."/>
            <person name="Muzny D.M."/>
            <person name="Ayele M."/>
            <person name="Gibbs R.A."/>
            <person name="Csorgo B."/>
            <person name="Posfai G."/>
            <person name="Weinstock G.M."/>
            <person name="Blattner F.R."/>
        </authorList>
    </citation>
    <scope>NUCLEOTIDE SEQUENCE [LARGE SCALE GENOMIC DNA]</scope>
    <source>
        <strain>K12 / DH10B</strain>
    </source>
</reference>
<comment type="similarity">
    <text evidence="1">Belongs to the UPF0502 family.</text>
</comment>
<keyword id="KW-0007">Acetylation</keyword>
<dbReference type="EMBL" id="CP000948">
    <property type="protein sequence ID" value="ACB02260.1"/>
    <property type="molecule type" value="Genomic_DNA"/>
</dbReference>
<dbReference type="RefSeq" id="WP_000877107.1">
    <property type="nucleotide sequence ID" value="NC_010473.1"/>
</dbReference>
<dbReference type="SMR" id="B1X9I0"/>
<dbReference type="KEGG" id="ecd:ECDH10B_1138"/>
<dbReference type="HOGENOM" id="CLU_057831_2_0_6"/>
<dbReference type="FunFam" id="1.10.10.10:FF:000196">
    <property type="entry name" value="UPF0502 protein YceH"/>
    <property type="match status" value="1"/>
</dbReference>
<dbReference type="FunFam" id="1.10.10.10:FF:000241">
    <property type="entry name" value="UPF0502 protein YceH"/>
    <property type="match status" value="1"/>
</dbReference>
<dbReference type="Gene3D" id="1.10.10.10">
    <property type="entry name" value="Winged helix-like DNA-binding domain superfamily/Winged helix DNA-binding domain"/>
    <property type="match status" value="2"/>
</dbReference>
<dbReference type="HAMAP" id="MF_01584">
    <property type="entry name" value="UPF0502"/>
    <property type="match status" value="1"/>
</dbReference>
<dbReference type="InterPro" id="IPR007432">
    <property type="entry name" value="DUF480"/>
</dbReference>
<dbReference type="InterPro" id="IPR036388">
    <property type="entry name" value="WH-like_DNA-bd_sf"/>
</dbReference>
<dbReference type="InterPro" id="IPR036390">
    <property type="entry name" value="WH_DNA-bd_sf"/>
</dbReference>
<dbReference type="NCBIfam" id="NF008413">
    <property type="entry name" value="PRK11239.1"/>
    <property type="match status" value="1"/>
</dbReference>
<dbReference type="PANTHER" id="PTHR38768">
    <property type="entry name" value="UPF0502 PROTEIN YCEH"/>
    <property type="match status" value="1"/>
</dbReference>
<dbReference type="PANTHER" id="PTHR38768:SF1">
    <property type="entry name" value="UPF0502 PROTEIN YCEH"/>
    <property type="match status" value="1"/>
</dbReference>
<dbReference type="Pfam" id="PF04337">
    <property type="entry name" value="DUF480"/>
    <property type="match status" value="1"/>
</dbReference>
<dbReference type="SUPFAM" id="SSF46785">
    <property type="entry name" value="Winged helix' DNA-binding domain"/>
    <property type="match status" value="2"/>
</dbReference>
<sequence>MKYQLTALEARVIGCLLEKQVTTPEQYPLSVNGVVTACNQKTNREPVMNLSESEVQEQLDNLVKRHYLRTVSGFGNRVTKYEQRFCNSEFGDLKLSAAEVALITTLLLRGAQTPGELRSRAARMYEFSDMAEVESTLEQLANREDGPFVVRLAREPGKRENRYMHLFSGEVEDQPAVTDMSNAVDGDLQARVEALEIEVAELKQRLDSLLAHLGD</sequence>
<organism>
    <name type="scientific">Escherichia coli (strain K12 / DH10B)</name>
    <dbReference type="NCBI Taxonomy" id="316385"/>
    <lineage>
        <taxon>Bacteria</taxon>
        <taxon>Pseudomonadati</taxon>
        <taxon>Pseudomonadota</taxon>
        <taxon>Gammaproteobacteria</taxon>
        <taxon>Enterobacterales</taxon>
        <taxon>Enterobacteriaceae</taxon>
        <taxon>Escherichia</taxon>
    </lineage>
</organism>
<proteinExistence type="inferred from homology"/>